<organism>
    <name type="scientific">Prochlorococcus marinus (strain MIT 9515)</name>
    <dbReference type="NCBI Taxonomy" id="167542"/>
    <lineage>
        <taxon>Bacteria</taxon>
        <taxon>Bacillati</taxon>
        <taxon>Cyanobacteriota</taxon>
        <taxon>Cyanophyceae</taxon>
        <taxon>Synechococcales</taxon>
        <taxon>Prochlorococcaceae</taxon>
        <taxon>Prochlorococcus</taxon>
    </lineage>
</organism>
<feature type="chain" id="PRO_1000050741" description="Large ribosomal subunit protein bL35">
    <location>
        <begin position="1"/>
        <end position="65"/>
    </location>
</feature>
<comment type="similarity">
    <text evidence="1">Belongs to the bacterial ribosomal protein bL35 family.</text>
</comment>
<protein>
    <recommendedName>
        <fullName evidence="1">Large ribosomal subunit protein bL35</fullName>
    </recommendedName>
    <alternativeName>
        <fullName evidence="2">50S ribosomal protein L35</fullName>
    </alternativeName>
</protein>
<dbReference type="EMBL" id="CP000552">
    <property type="protein sequence ID" value="ABM73058.1"/>
    <property type="molecule type" value="Genomic_DNA"/>
</dbReference>
<dbReference type="RefSeq" id="WP_011819271.1">
    <property type="nucleotide sequence ID" value="NC_008817.1"/>
</dbReference>
<dbReference type="SMR" id="A2BZ47"/>
<dbReference type="STRING" id="167542.P9515_18511"/>
<dbReference type="GeneID" id="60202104"/>
<dbReference type="KEGG" id="pmc:P9515_18511"/>
<dbReference type="eggNOG" id="COG0291">
    <property type="taxonomic scope" value="Bacteria"/>
</dbReference>
<dbReference type="HOGENOM" id="CLU_169643_4_0_3"/>
<dbReference type="OrthoDB" id="47476at2"/>
<dbReference type="Proteomes" id="UP000001589">
    <property type="component" value="Chromosome"/>
</dbReference>
<dbReference type="GO" id="GO:0022625">
    <property type="term" value="C:cytosolic large ribosomal subunit"/>
    <property type="evidence" value="ECO:0007669"/>
    <property type="project" value="TreeGrafter"/>
</dbReference>
<dbReference type="GO" id="GO:0003735">
    <property type="term" value="F:structural constituent of ribosome"/>
    <property type="evidence" value="ECO:0007669"/>
    <property type="project" value="InterPro"/>
</dbReference>
<dbReference type="GO" id="GO:0006412">
    <property type="term" value="P:translation"/>
    <property type="evidence" value="ECO:0007669"/>
    <property type="project" value="UniProtKB-UniRule"/>
</dbReference>
<dbReference type="FunFam" id="4.10.410.60:FF:000001">
    <property type="entry name" value="50S ribosomal protein L35"/>
    <property type="match status" value="1"/>
</dbReference>
<dbReference type="Gene3D" id="4.10.410.60">
    <property type="match status" value="1"/>
</dbReference>
<dbReference type="HAMAP" id="MF_00514">
    <property type="entry name" value="Ribosomal_bL35"/>
    <property type="match status" value="1"/>
</dbReference>
<dbReference type="InterPro" id="IPR001706">
    <property type="entry name" value="Ribosomal_bL35"/>
</dbReference>
<dbReference type="InterPro" id="IPR021137">
    <property type="entry name" value="Ribosomal_bL35-like"/>
</dbReference>
<dbReference type="InterPro" id="IPR018265">
    <property type="entry name" value="Ribosomal_bL35_CS"/>
</dbReference>
<dbReference type="InterPro" id="IPR037229">
    <property type="entry name" value="Ribosomal_bL35_sf"/>
</dbReference>
<dbReference type="NCBIfam" id="TIGR00001">
    <property type="entry name" value="rpmI_bact"/>
    <property type="match status" value="1"/>
</dbReference>
<dbReference type="PANTHER" id="PTHR33343">
    <property type="entry name" value="54S RIBOSOMAL PROTEIN BL35M"/>
    <property type="match status" value="1"/>
</dbReference>
<dbReference type="PANTHER" id="PTHR33343:SF1">
    <property type="entry name" value="LARGE RIBOSOMAL SUBUNIT PROTEIN BL35M"/>
    <property type="match status" value="1"/>
</dbReference>
<dbReference type="Pfam" id="PF01632">
    <property type="entry name" value="Ribosomal_L35p"/>
    <property type="match status" value="1"/>
</dbReference>
<dbReference type="PRINTS" id="PR00064">
    <property type="entry name" value="RIBOSOMALL35"/>
</dbReference>
<dbReference type="SUPFAM" id="SSF143034">
    <property type="entry name" value="L35p-like"/>
    <property type="match status" value="1"/>
</dbReference>
<dbReference type="PROSITE" id="PS00936">
    <property type="entry name" value="RIBOSOMAL_L35"/>
    <property type="match status" value="1"/>
</dbReference>
<accession>A2BZ47</accession>
<name>RL35_PROM5</name>
<proteinExistence type="inferred from homology"/>
<keyword id="KW-0687">Ribonucleoprotein</keyword>
<keyword id="KW-0689">Ribosomal protein</keyword>
<reference key="1">
    <citation type="journal article" date="2007" name="PLoS Genet.">
        <title>Patterns and implications of gene gain and loss in the evolution of Prochlorococcus.</title>
        <authorList>
            <person name="Kettler G.C."/>
            <person name="Martiny A.C."/>
            <person name="Huang K."/>
            <person name="Zucker J."/>
            <person name="Coleman M.L."/>
            <person name="Rodrigue S."/>
            <person name="Chen F."/>
            <person name="Lapidus A."/>
            <person name="Ferriera S."/>
            <person name="Johnson J."/>
            <person name="Steglich C."/>
            <person name="Church G.M."/>
            <person name="Richardson P."/>
            <person name="Chisholm S.W."/>
        </authorList>
    </citation>
    <scope>NUCLEOTIDE SEQUENCE [LARGE SCALE GENOMIC DNA]</scope>
    <source>
        <strain>MIT 9515</strain>
    </source>
</reference>
<sequence length="65" mass="7566">MSKLKTRKSAAKRFKATATGKFMRRRAFHNHLLDHKSSKLKRHLSTKAVVDERDADNVRLMIPYA</sequence>
<evidence type="ECO:0000255" key="1">
    <source>
        <dbReference type="HAMAP-Rule" id="MF_00514"/>
    </source>
</evidence>
<evidence type="ECO:0000305" key="2"/>
<gene>
    <name evidence="1" type="primary">rpmI</name>
    <name evidence="1" type="synonym">rpl35</name>
    <name type="ordered locus">P9515_18511</name>
</gene>